<organism>
    <name type="scientific">Staphylococcus saprophyticus subsp. saprophyticus (strain ATCC 15305 / DSM 20229 / NCIMB 8711 / NCTC 7292 / S-41)</name>
    <dbReference type="NCBI Taxonomy" id="342451"/>
    <lineage>
        <taxon>Bacteria</taxon>
        <taxon>Bacillati</taxon>
        <taxon>Bacillota</taxon>
        <taxon>Bacilli</taxon>
        <taxon>Bacillales</taxon>
        <taxon>Staphylococcaceae</taxon>
        <taxon>Staphylococcus</taxon>
    </lineage>
</organism>
<dbReference type="EC" id="1.5.1.2" evidence="1"/>
<dbReference type="EMBL" id="AP008934">
    <property type="protein sequence ID" value="BAE18395.1"/>
    <property type="molecule type" value="Genomic_DNA"/>
</dbReference>
<dbReference type="RefSeq" id="WP_011303054.1">
    <property type="nucleotide sequence ID" value="NZ_MTGA01000038.1"/>
</dbReference>
<dbReference type="SMR" id="Q49XV0"/>
<dbReference type="DNASU" id="3616880"/>
<dbReference type="GeneID" id="3616880"/>
<dbReference type="KEGG" id="ssp:SSP1250"/>
<dbReference type="eggNOG" id="COG0345">
    <property type="taxonomic scope" value="Bacteria"/>
</dbReference>
<dbReference type="HOGENOM" id="CLU_042344_0_1_9"/>
<dbReference type="OrthoDB" id="9805754at2"/>
<dbReference type="UniPathway" id="UPA00098">
    <property type="reaction ID" value="UER00361"/>
</dbReference>
<dbReference type="Proteomes" id="UP000006371">
    <property type="component" value="Chromosome"/>
</dbReference>
<dbReference type="GO" id="GO:0005737">
    <property type="term" value="C:cytoplasm"/>
    <property type="evidence" value="ECO:0007669"/>
    <property type="project" value="UniProtKB-SubCell"/>
</dbReference>
<dbReference type="GO" id="GO:0004735">
    <property type="term" value="F:pyrroline-5-carboxylate reductase activity"/>
    <property type="evidence" value="ECO:0007669"/>
    <property type="project" value="UniProtKB-UniRule"/>
</dbReference>
<dbReference type="GO" id="GO:0055129">
    <property type="term" value="P:L-proline biosynthetic process"/>
    <property type="evidence" value="ECO:0007669"/>
    <property type="project" value="UniProtKB-UniRule"/>
</dbReference>
<dbReference type="FunFam" id="1.10.3730.10:FF:000001">
    <property type="entry name" value="Pyrroline-5-carboxylate reductase"/>
    <property type="match status" value="1"/>
</dbReference>
<dbReference type="Gene3D" id="3.40.50.720">
    <property type="entry name" value="NAD(P)-binding Rossmann-like Domain"/>
    <property type="match status" value="1"/>
</dbReference>
<dbReference type="Gene3D" id="1.10.3730.10">
    <property type="entry name" value="ProC C-terminal domain-like"/>
    <property type="match status" value="1"/>
</dbReference>
<dbReference type="HAMAP" id="MF_01925">
    <property type="entry name" value="P5C_reductase"/>
    <property type="match status" value="1"/>
</dbReference>
<dbReference type="InterPro" id="IPR008927">
    <property type="entry name" value="6-PGluconate_DH-like_C_sf"/>
</dbReference>
<dbReference type="InterPro" id="IPR036291">
    <property type="entry name" value="NAD(P)-bd_dom_sf"/>
</dbReference>
<dbReference type="InterPro" id="IPR028939">
    <property type="entry name" value="P5C_Rdtase_cat_N"/>
</dbReference>
<dbReference type="InterPro" id="IPR029036">
    <property type="entry name" value="P5CR_dimer"/>
</dbReference>
<dbReference type="InterPro" id="IPR000304">
    <property type="entry name" value="Pyrroline-COOH_reductase"/>
</dbReference>
<dbReference type="NCBIfam" id="TIGR00112">
    <property type="entry name" value="proC"/>
    <property type="match status" value="1"/>
</dbReference>
<dbReference type="PANTHER" id="PTHR11645">
    <property type="entry name" value="PYRROLINE-5-CARBOXYLATE REDUCTASE"/>
    <property type="match status" value="1"/>
</dbReference>
<dbReference type="PANTHER" id="PTHR11645:SF0">
    <property type="entry name" value="PYRROLINE-5-CARBOXYLATE REDUCTASE 3"/>
    <property type="match status" value="1"/>
</dbReference>
<dbReference type="Pfam" id="PF03807">
    <property type="entry name" value="F420_oxidored"/>
    <property type="match status" value="1"/>
</dbReference>
<dbReference type="Pfam" id="PF14748">
    <property type="entry name" value="P5CR_dimer"/>
    <property type="match status" value="1"/>
</dbReference>
<dbReference type="PIRSF" id="PIRSF000193">
    <property type="entry name" value="Pyrrol-5-carb_rd"/>
    <property type="match status" value="1"/>
</dbReference>
<dbReference type="SUPFAM" id="SSF48179">
    <property type="entry name" value="6-phosphogluconate dehydrogenase C-terminal domain-like"/>
    <property type="match status" value="1"/>
</dbReference>
<dbReference type="SUPFAM" id="SSF51735">
    <property type="entry name" value="NAD(P)-binding Rossmann-fold domains"/>
    <property type="match status" value="1"/>
</dbReference>
<sequence length="271" mass="29870">MKLVFYGAGNMAHAIFTGIVNSKVIDSNDIYLTNRSNEVALKEYAEKLGVNYSYDDEALLKAADYVFLGTKPYDFESLAERIKPFITDKNKFISIMAGLPISYIREKLEADNPIARIMPNTNAHVGHSVTGISFSSNFGPNSKDEVDELINAFGSAIEVPEDNLHQVTAITGSGPAFLYHVFEQYVTAGTRLGLEKAQVEESIRNLIIGTSKMIERSELSMEQLRKNITSKGGTTQAGLNALSQHDLESVFEDCLRAAVDRSVELSSQDED</sequence>
<protein>
    <recommendedName>
        <fullName evidence="1">Pyrroline-5-carboxylate reductase</fullName>
        <shortName evidence="1">P5C reductase</shortName>
        <shortName evidence="1">P5CR</shortName>
        <ecNumber evidence="1">1.5.1.2</ecNumber>
    </recommendedName>
    <alternativeName>
        <fullName evidence="1">PCA reductase</fullName>
    </alternativeName>
</protein>
<gene>
    <name evidence="1" type="primary">proC</name>
    <name type="ordered locus">SSP1250</name>
</gene>
<reference key="1">
    <citation type="journal article" date="2005" name="Proc. Natl. Acad. Sci. U.S.A.">
        <title>Whole genome sequence of Staphylococcus saprophyticus reveals the pathogenesis of uncomplicated urinary tract infection.</title>
        <authorList>
            <person name="Kuroda M."/>
            <person name="Yamashita A."/>
            <person name="Hirakawa H."/>
            <person name="Kumano M."/>
            <person name="Morikawa K."/>
            <person name="Higashide M."/>
            <person name="Maruyama A."/>
            <person name="Inose Y."/>
            <person name="Matoba K."/>
            <person name="Toh H."/>
            <person name="Kuhara S."/>
            <person name="Hattori M."/>
            <person name="Ohta T."/>
        </authorList>
    </citation>
    <scope>NUCLEOTIDE SEQUENCE [LARGE SCALE GENOMIC DNA]</scope>
    <source>
        <strain>ATCC 15305 / DSM 20229 / NCIMB 8711 / NCTC 7292 / S-41</strain>
    </source>
</reference>
<name>P5CR_STAS1</name>
<evidence type="ECO:0000255" key="1">
    <source>
        <dbReference type="HAMAP-Rule" id="MF_01925"/>
    </source>
</evidence>
<accession>Q49XV0</accession>
<comment type="function">
    <text evidence="1">Catalyzes the reduction of 1-pyrroline-5-carboxylate (PCA) to L-proline.</text>
</comment>
<comment type="catalytic activity">
    <reaction evidence="1">
        <text>L-proline + NADP(+) = (S)-1-pyrroline-5-carboxylate + NADPH + 2 H(+)</text>
        <dbReference type="Rhea" id="RHEA:14109"/>
        <dbReference type="ChEBI" id="CHEBI:15378"/>
        <dbReference type="ChEBI" id="CHEBI:17388"/>
        <dbReference type="ChEBI" id="CHEBI:57783"/>
        <dbReference type="ChEBI" id="CHEBI:58349"/>
        <dbReference type="ChEBI" id="CHEBI:60039"/>
        <dbReference type="EC" id="1.5.1.2"/>
    </reaction>
</comment>
<comment type="catalytic activity">
    <reaction evidence="1">
        <text>L-proline + NAD(+) = (S)-1-pyrroline-5-carboxylate + NADH + 2 H(+)</text>
        <dbReference type="Rhea" id="RHEA:14105"/>
        <dbReference type="ChEBI" id="CHEBI:15378"/>
        <dbReference type="ChEBI" id="CHEBI:17388"/>
        <dbReference type="ChEBI" id="CHEBI:57540"/>
        <dbReference type="ChEBI" id="CHEBI:57945"/>
        <dbReference type="ChEBI" id="CHEBI:60039"/>
        <dbReference type="EC" id="1.5.1.2"/>
    </reaction>
</comment>
<comment type="pathway">
    <text evidence="1">Amino-acid biosynthesis; L-proline biosynthesis; L-proline from L-glutamate 5-semialdehyde: step 1/1.</text>
</comment>
<comment type="subcellular location">
    <subcellularLocation>
        <location evidence="1">Cytoplasm</location>
    </subcellularLocation>
</comment>
<comment type="similarity">
    <text evidence="1">Belongs to the pyrroline-5-carboxylate reductase family.</text>
</comment>
<proteinExistence type="inferred from homology"/>
<keyword id="KW-0028">Amino-acid biosynthesis</keyword>
<keyword id="KW-0963">Cytoplasm</keyword>
<keyword id="KW-0521">NADP</keyword>
<keyword id="KW-0560">Oxidoreductase</keyword>
<keyword id="KW-0641">Proline biosynthesis</keyword>
<keyword id="KW-1185">Reference proteome</keyword>
<feature type="chain" id="PRO_0000187307" description="Pyrroline-5-carboxylate reductase">
    <location>
        <begin position="1"/>
        <end position="271"/>
    </location>
</feature>